<organism>
    <name type="scientific">Arabidopsis thaliana</name>
    <name type="common">Mouse-ear cress</name>
    <dbReference type="NCBI Taxonomy" id="3702"/>
    <lineage>
        <taxon>Eukaryota</taxon>
        <taxon>Viridiplantae</taxon>
        <taxon>Streptophyta</taxon>
        <taxon>Embryophyta</taxon>
        <taxon>Tracheophyta</taxon>
        <taxon>Spermatophyta</taxon>
        <taxon>Magnoliopsida</taxon>
        <taxon>eudicotyledons</taxon>
        <taxon>Gunneridae</taxon>
        <taxon>Pentapetalae</taxon>
        <taxon>rosids</taxon>
        <taxon>malvids</taxon>
        <taxon>Brassicales</taxon>
        <taxon>Brassicaceae</taxon>
        <taxon>Camelineae</taxon>
        <taxon>Arabidopsis</taxon>
    </lineage>
</organism>
<protein>
    <recommendedName>
        <fullName>Putative defensin-like protein 110</fullName>
    </recommendedName>
</protein>
<reference key="1">
    <citation type="journal article" date="2000" name="Nature">
        <title>Sequence and analysis of chromosome 1 of the plant Arabidopsis thaliana.</title>
        <authorList>
            <person name="Theologis A."/>
            <person name="Ecker J.R."/>
            <person name="Palm C.J."/>
            <person name="Federspiel N.A."/>
            <person name="Kaul S."/>
            <person name="White O."/>
            <person name="Alonso J."/>
            <person name="Altafi H."/>
            <person name="Araujo R."/>
            <person name="Bowman C.L."/>
            <person name="Brooks S.Y."/>
            <person name="Buehler E."/>
            <person name="Chan A."/>
            <person name="Chao Q."/>
            <person name="Chen H."/>
            <person name="Cheuk R.F."/>
            <person name="Chin C.W."/>
            <person name="Chung M.K."/>
            <person name="Conn L."/>
            <person name="Conway A.B."/>
            <person name="Conway A.R."/>
            <person name="Creasy T.H."/>
            <person name="Dewar K."/>
            <person name="Dunn P."/>
            <person name="Etgu P."/>
            <person name="Feldblyum T.V."/>
            <person name="Feng J.-D."/>
            <person name="Fong B."/>
            <person name="Fujii C.Y."/>
            <person name="Gill J.E."/>
            <person name="Goldsmith A.D."/>
            <person name="Haas B."/>
            <person name="Hansen N.F."/>
            <person name="Hughes B."/>
            <person name="Huizar L."/>
            <person name="Hunter J.L."/>
            <person name="Jenkins J."/>
            <person name="Johnson-Hopson C."/>
            <person name="Khan S."/>
            <person name="Khaykin E."/>
            <person name="Kim C.J."/>
            <person name="Koo H.L."/>
            <person name="Kremenetskaia I."/>
            <person name="Kurtz D.B."/>
            <person name="Kwan A."/>
            <person name="Lam B."/>
            <person name="Langin-Hooper S."/>
            <person name="Lee A."/>
            <person name="Lee J.M."/>
            <person name="Lenz C.A."/>
            <person name="Li J.H."/>
            <person name="Li Y.-P."/>
            <person name="Lin X."/>
            <person name="Liu S.X."/>
            <person name="Liu Z.A."/>
            <person name="Luros J.S."/>
            <person name="Maiti R."/>
            <person name="Marziali A."/>
            <person name="Militscher J."/>
            <person name="Miranda M."/>
            <person name="Nguyen M."/>
            <person name="Nierman W.C."/>
            <person name="Osborne B.I."/>
            <person name="Pai G."/>
            <person name="Peterson J."/>
            <person name="Pham P.K."/>
            <person name="Rizzo M."/>
            <person name="Rooney T."/>
            <person name="Rowley D."/>
            <person name="Sakano H."/>
            <person name="Salzberg S.L."/>
            <person name="Schwartz J.R."/>
            <person name="Shinn P."/>
            <person name="Southwick A.M."/>
            <person name="Sun H."/>
            <person name="Tallon L.J."/>
            <person name="Tambunga G."/>
            <person name="Toriumi M.J."/>
            <person name="Town C.D."/>
            <person name="Utterback T."/>
            <person name="Van Aken S."/>
            <person name="Vaysberg M."/>
            <person name="Vysotskaia V.S."/>
            <person name="Walker M."/>
            <person name="Wu D."/>
            <person name="Yu G."/>
            <person name="Fraser C.M."/>
            <person name="Venter J.C."/>
            <person name="Davis R.W."/>
        </authorList>
    </citation>
    <scope>NUCLEOTIDE SEQUENCE [LARGE SCALE GENOMIC DNA]</scope>
    <source>
        <strain>cv. Columbia</strain>
    </source>
</reference>
<reference key="2">
    <citation type="journal article" date="2017" name="Plant J.">
        <title>Araport11: a complete reannotation of the Arabidopsis thaliana reference genome.</title>
        <authorList>
            <person name="Cheng C.Y."/>
            <person name="Krishnakumar V."/>
            <person name="Chan A.P."/>
            <person name="Thibaud-Nissen F."/>
            <person name="Schobel S."/>
            <person name="Town C.D."/>
        </authorList>
    </citation>
    <scope>GENOME REANNOTATION</scope>
    <source>
        <strain>cv. Columbia</strain>
    </source>
</reference>
<reference key="3">
    <citation type="journal article" date="2005" name="Plant Physiol.">
        <title>Genome organization of more than 300 defensin-like genes in Arabidopsis.</title>
        <authorList>
            <person name="Silverstein K.A.T."/>
            <person name="Graham M.A."/>
            <person name="Paape T.D."/>
            <person name="VandenBosch K.A."/>
        </authorList>
    </citation>
    <scope>GENE FAMILY</scope>
</reference>
<gene>
    <name type="ordered locus">At1g15757</name>
    <name type="ORF">F7H2</name>
</gene>
<keyword id="KW-0929">Antimicrobial</keyword>
<keyword id="KW-1015">Disulfide bond</keyword>
<keyword id="KW-0295">Fungicide</keyword>
<keyword id="KW-0611">Plant defense</keyword>
<keyword id="KW-1185">Reference proteome</keyword>
<keyword id="KW-0964">Secreted</keyword>
<keyword id="KW-0732">Signal</keyword>
<feature type="signal peptide" evidence="2">
    <location>
        <begin position="1"/>
        <end position="24"/>
    </location>
</feature>
<feature type="chain" id="PRO_0000379673" description="Putative defensin-like protein 110">
    <location>
        <begin position="25"/>
        <end position="83"/>
    </location>
</feature>
<feature type="disulfide bond" evidence="1">
    <location>
        <begin position="43"/>
        <end position="81"/>
    </location>
</feature>
<feature type="disulfide bond" evidence="1">
    <location>
        <begin position="49"/>
        <end position="73"/>
    </location>
</feature>
<feature type="disulfide bond" evidence="1">
    <location>
        <begin position="59"/>
        <end position="79"/>
    </location>
</feature>
<feature type="disulfide bond" evidence="1">
    <location>
        <begin position="63"/>
        <end position="80"/>
    </location>
</feature>
<accession>Q2V4N0</accession>
<proteinExistence type="inferred from homology"/>
<evidence type="ECO:0000250" key="1"/>
<evidence type="ECO:0000255" key="2"/>
<evidence type="ECO:0000305" key="3"/>
<name>DF110_ARATH</name>
<comment type="subcellular location">
    <subcellularLocation>
        <location evidence="1">Secreted</location>
    </subcellularLocation>
</comment>
<comment type="similarity">
    <text evidence="3">Belongs to the DEFL family.</text>
</comment>
<sequence>MAITKKNLIAFVFTILFVISYVHCRSTSDIVSGSGIKEDEHVCFKTSPCLPEVGGEKGCIAFCSRMKFTTGLCLGSVVCCCYT</sequence>
<dbReference type="EMBL" id="AC034256">
    <property type="status" value="NOT_ANNOTATED_CDS"/>
    <property type="molecule type" value="Genomic_DNA"/>
</dbReference>
<dbReference type="EMBL" id="CP002684">
    <property type="protein sequence ID" value="AEE29360.1"/>
    <property type="molecule type" value="Genomic_DNA"/>
</dbReference>
<dbReference type="RefSeq" id="NP_001031052.1">
    <property type="nucleotide sequence ID" value="NM_001035975.2"/>
</dbReference>
<dbReference type="PaxDb" id="3702-AT1G15757.1"/>
<dbReference type="ProteomicsDB" id="224635"/>
<dbReference type="EnsemblPlants" id="AT1G15757.1">
    <property type="protein sequence ID" value="AT1G15757.1"/>
    <property type="gene ID" value="AT1G15757"/>
</dbReference>
<dbReference type="GeneID" id="3766735"/>
<dbReference type="Gramene" id="AT1G15757.1">
    <property type="protein sequence ID" value="AT1G15757.1"/>
    <property type="gene ID" value="AT1G15757"/>
</dbReference>
<dbReference type="KEGG" id="ath:AT1G15757"/>
<dbReference type="Araport" id="AT1G15757"/>
<dbReference type="TAIR" id="AT1G15757"/>
<dbReference type="HOGENOM" id="CLU_183259_0_0_1"/>
<dbReference type="InParanoid" id="Q2V4N0"/>
<dbReference type="OMA" id="ISYVHCR"/>
<dbReference type="PhylomeDB" id="Q2V4N0"/>
<dbReference type="PRO" id="PR:Q2V4N0"/>
<dbReference type="Proteomes" id="UP000006548">
    <property type="component" value="Chromosome 1"/>
</dbReference>
<dbReference type="ExpressionAtlas" id="Q2V4N0">
    <property type="expression patterns" value="baseline"/>
</dbReference>
<dbReference type="GO" id="GO:0005576">
    <property type="term" value="C:extracellular region"/>
    <property type="evidence" value="ECO:0007669"/>
    <property type="project" value="UniProtKB-SubCell"/>
</dbReference>
<dbReference type="GO" id="GO:0050832">
    <property type="term" value="P:defense response to fungus"/>
    <property type="evidence" value="ECO:0007669"/>
    <property type="project" value="UniProtKB-KW"/>
</dbReference>
<dbReference type="GO" id="GO:0031640">
    <property type="term" value="P:killing of cells of another organism"/>
    <property type="evidence" value="ECO:0007669"/>
    <property type="project" value="UniProtKB-KW"/>
</dbReference>